<evidence type="ECO:0000250" key="1"/>
<evidence type="ECO:0000256" key="2">
    <source>
        <dbReference type="SAM" id="MobiDB-lite"/>
    </source>
</evidence>
<evidence type="ECO:0000269" key="3">
    <source ref="2"/>
</evidence>
<evidence type="ECO:0000305" key="4"/>
<gene>
    <name type="primary">dnaK</name>
    <name type="ordered locus">M6_Spy1492</name>
</gene>
<accession>Q5XAD6</accession>
<dbReference type="EMBL" id="CP000003">
    <property type="protein sequence ID" value="AAT87627.1"/>
    <property type="molecule type" value="Genomic_DNA"/>
</dbReference>
<dbReference type="RefSeq" id="WP_010922599.1">
    <property type="nucleotide sequence ID" value="NC_006086.1"/>
</dbReference>
<dbReference type="SMR" id="Q5XAD6"/>
<dbReference type="KEGG" id="spa:M6_Spy1492"/>
<dbReference type="HOGENOM" id="CLU_005965_2_4_9"/>
<dbReference type="Proteomes" id="UP000001167">
    <property type="component" value="Chromosome"/>
</dbReference>
<dbReference type="GO" id="GO:0005524">
    <property type="term" value="F:ATP binding"/>
    <property type="evidence" value="ECO:0007669"/>
    <property type="project" value="UniProtKB-UniRule"/>
</dbReference>
<dbReference type="GO" id="GO:0140662">
    <property type="term" value="F:ATP-dependent protein folding chaperone"/>
    <property type="evidence" value="ECO:0007669"/>
    <property type="project" value="InterPro"/>
</dbReference>
<dbReference type="GO" id="GO:0051082">
    <property type="term" value="F:unfolded protein binding"/>
    <property type="evidence" value="ECO:0007669"/>
    <property type="project" value="InterPro"/>
</dbReference>
<dbReference type="CDD" id="cd10234">
    <property type="entry name" value="ASKHA_NBD_HSP70_DnaK-like"/>
    <property type="match status" value="1"/>
</dbReference>
<dbReference type="FunFam" id="2.60.34.10:FF:000014">
    <property type="entry name" value="Chaperone protein DnaK HSP70"/>
    <property type="match status" value="1"/>
</dbReference>
<dbReference type="FunFam" id="3.30.420.40:FF:000071">
    <property type="entry name" value="Molecular chaperone DnaK"/>
    <property type="match status" value="1"/>
</dbReference>
<dbReference type="FunFam" id="3.90.640.10:FF:000003">
    <property type="entry name" value="Molecular chaperone DnaK"/>
    <property type="match status" value="1"/>
</dbReference>
<dbReference type="Gene3D" id="1.20.1270.10">
    <property type="match status" value="1"/>
</dbReference>
<dbReference type="Gene3D" id="3.30.420.40">
    <property type="match status" value="2"/>
</dbReference>
<dbReference type="Gene3D" id="3.90.640.10">
    <property type="entry name" value="Actin, Chain A, domain 4"/>
    <property type="match status" value="1"/>
</dbReference>
<dbReference type="Gene3D" id="2.60.34.10">
    <property type="entry name" value="Substrate Binding Domain Of DNAk, Chain A, domain 1"/>
    <property type="match status" value="1"/>
</dbReference>
<dbReference type="HAMAP" id="MF_00332">
    <property type="entry name" value="DnaK"/>
    <property type="match status" value="1"/>
</dbReference>
<dbReference type="InterPro" id="IPR043129">
    <property type="entry name" value="ATPase_NBD"/>
</dbReference>
<dbReference type="InterPro" id="IPR012725">
    <property type="entry name" value="Chaperone_DnaK"/>
</dbReference>
<dbReference type="InterPro" id="IPR018181">
    <property type="entry name" value="Heat_shock_70_CS"/>
</dbReference>
<dbReference type="InterPro" id="IPR029048">
    <property type="entry name" value="HSP70_C_sf"/>
</dbReference>
<dbReference type="InterPro" id="IPR029047">
    <property type="entry name" value="HSP70_peptide-bd_sf"/>
</dbReference>
<dbReference type="InterPro" id="IPR013126">
    <property type="entry name" value="Hsp_70_fam"/>
</dbReference>
<dbReference type="NCBIfam" id="NF001413">
    <property type="entry name" value="PRK00290.1"/>
    <property type="match status" value="1"/>
</dbReference>
<dbReference type="NCBIfam" id="TIGR02350">
    <property type="entry name" value="prok_dnaK"/>
    <property type="match status" value="1"/>
</dbReference>
<dbReference type="PANTHER" id="PTHR19375">
    <property type="entry name" value="HEAT SHOCK PROTEIN 70KDA"/>
    <property type="match status" value="1"/>
</dbReference>
<dbReference type="Pfam" id="PF00012">
    <property type="entry name" value="HSP70"/>
    <property type="match status" value="1"/>
</dbReference>
<dbReference type="PRINTS" id="PR00301">
    <property type="entry name" value="HEATSHOCK70"/>
</dbReference>
<dbReference type="SUPFAM" id="SSF53067">
    <property type="entry name" value="Actin-like ATPase domain"/>
    <property type="match status" value="2"/>
</dbReference>
<dbReference type="SUPFAM" id="SSF100934">
    <property type="entry name" value="Heat shock protein 70kD (HSP70), C-terminal subdomain"/>
    <property type="match status" value="1"/>
</dbReference>
<dbReference type="SUPFAM" id="SSF100920">
    <property type="entry name" value="Heat shock protein 70kD (HSP70), peptide-binding domain"/>
    <property type="match status" value="1"/>
</dbReference>
<dbReference type="PROSITE" id="PS00297">
    <property type="entry name" value="HSP70_1"/>
    <property type="match status" value="1"/>
</dbReference>
<dbReference type="PROSITE" id="PS00329">
    <property type="entry name" value="HSP70_2"/>
    <property type="match status" value="1"/>
</dbReference>
<dbReference type="PROSITE" id="PS01036">
    <property type="entry name" value="HSP70_3"/>
    <property type="match status" value="1"/>
</dbReference>
<organism>
    <name type="scientific">Streptococcus pyogenes serotype M6 (strain ATCC BAA-946 / MGAS10394)</name>
    <dbReference type="NCBI Taxonomy" id="286636"/>
    <lineage>
        <taxon>Bacteria</taxon>
        <taxon>Bacillati</taxon>
        <taxon>Bacillota</taxon>
        <taxon>Bacilli</taxon>
        <taxon>Lactobacillales</taxon>
        <taxon>Streptococcaceae</taxon>
        <taxon>Streptococcus</taxon>
    </lineage>
</organism>
<proteinExistence type="evidence at protein level"/>
<comment type="function">
    <text evidence="1">Acts as a chaperone.</text>
</comment>
<comment type="induction">
    <text evidence="1">By stress conditions e.g. heat shock (By similarity).</text>
</comment>
<comment type="similarity">
    <text evidence="4">Belongs to the heat shock protein 70 family.</text>
</comment>
<protein>
    <recommendedName>
        <fullName>Chaperone protein DnaK</fullName>
    </recommendedName>
    <alternativeName>
        <fullName>HSP70</fullName>
    </alternativeName>
    <alternativeName>
        <fullName>Heat shock 70 kDa protein</fullName>
    </alternativeName>
    <alternativeName>
        <fullName>Heat shock protein 70</fullName>
    </alternativeName>
</protein>
<keyword id="KW-0067">ATP-binding</keyword>
<keyword id="KW-0143">Chaperone</keyword>
<keyword id="KW-0903">Direct protein sequencing</keyword>
<keyword id="KW-0547">Nucleotide-binding</keyword>
<keyword id="KW-0597">Phosphoprotein</keyword>
<keyword id="KW-0346">Stress response</keyword>
<feature type="initiator methionine" description="Removed" evidence="3">
    <location>
        <position position="1"/>
    </location>
</feature>
<feature type="chain" id="PRO_0000078558" description="Chaperone protein DnaK">
    <location>
        <begin position="2"/>
        <end position="608"/>
    </location>
</feature>
<feature type="region of interest" description="Disordered" evidence="2">
    <location>
        <begin position="578"/>
        <end position="608"/>
    </location>
</feature>
<feature type="compositionally biased region" description="Low complexity" evidence="2">
    <location>
        <begin position="578"/>
        <end position="598"/>
    </location>
</feature>
<feature type="compositionally biased region" description="Acidic residues" evidence="2">
    <location>
        <begin position="599"/>
        <end position="608"/>
    </location>
</feature>
<feature type="modified residue" description="Phosphothreonine; by autocatalysis" evidence="1">
    <location>
        <position position="173"/>
    </location>
</feature>
<sequence length="608" mass="64920">MSKIIGIDLGTTNSAVAVLEGTESKIIANPEGNRTTPSVVSFKNGEIIVGDAAKRQAVTNPETVISIKSKMGTSEKVSANGKEYTPQEISAMILQYLKGYAEDYLGEKVEKAVITVPAYFNDAQRQATKDAGKIAGLEVERIVNEPTAAALAYGMDKTDKDEKILVFDLGGGTFDVSILELGDGVFDVLATAGDNKLGGDDFDQKIIDFLVAEFKKENGIDLSQDKMALQRLKDAAEKAKKDLSGVTQTQISLPFITAGSAGPLHLEMSLSRAKFDDLTRDLVERTKTPVRQALSDAGLSLSEIDEVILVGGSTRIPAVVEAVKAETGKEPNKSVNPDEVVAMGAAIQGGVITGDVKDVVLLDVTPLSLGIETMGGVFTKLIDRNTTIPTSKSQVFSTAADNQPAVDIHVLQGERPMAADNKTLGRFQLTDIPAAPRGIPQIEVTFDIDKNGIVSVKAKDLGTQKEQHIVIKSNDGLSEEEIDRMMKDAEANAEADAKRKEEVDLKNEVDQAIFATEKTIKETEGKGFDTERDAAQSALDELKAAQESGNLDDMKAKLEALNEKAQALAVKMYEQAAAAQQAAQGAEGAQANDSANNDDVVDGEFTEK</sequence>
<reference key="1">
    <citation type="journal article" date="2004" name="J. Infect. Dis.">
        <title>Progress toward characterization of the group A Streptococcus metagenome: complete genome sequence of a macrolide-resistant serotype M6 strain.</title>
        <authorList>
            <person name="Banks D.J."/>
            <person name="Porcella S.F."/>
            <person name="Barbian K.D."/>
            <person name="Beres S.B."/>
            <person name="Philips L.E."/>
            <person name="Voyich J.M."/>
            <person name="DeLeo F.R."/>
            <person name="Martin J.M."/>
            <person name="Somerville G.A."/>
            <person name="Musser J.M."/>
        </authorList>
    </citation>
    <scope>NUCLEOTIDE SEQUENCE [LARGE SCALE GENOMIC DNA]</scope>
    <source>
        <strain>ATCC BAA-946 / MGAS10394</strain>
    </source>
</reference>
<reference key="2">
    <citation type="submission" date="2000-05" db="UniProtKB">
        <title>Two-dimensional gel electrophoresis map of Streptococcus pyogenes proteins.</title>
        <authorList>
            <person name="Hogan D.A."/>
            <person name="Du P."/>
            <person name="Stevenson T.I."/>
            <person name="Whitton M."/>
            <person name="Kilby G.W."/>
            <person name="Rogers J."/>
            <person name="VanBogelen R.A."/>
        </authorList>
    </citation>
    <scope>PROTEIN SEQUENCE OF 2-12; 206-216 AND 427-437</scope>
    <scope>IDENTIFICATION BY MASS SPECTROMETRY</scope>
    <source>
        <strain>JRS4 / Serotype M6</strain>
    </source>
</reference>
<name>DNAK_STRP6</name>